<accession>C4K904</accession>
<reference key="1">
    <citation type="journal article" date="2009" name="Proc. Natl. Acad. Sci. U.S.A.">
        <title>Hamiltonella defensa, genome evolution of protective bacterial endosymbiont from pathogenic ancestors.</title>
        <authorList>
            <person name="Degnan P.H."/>
            <person name="Yu Y."/>
            <person name="Sisneros N."/>
            <person name="Wing R.A."/>
            <person name="Moran N.A."/>
        </authorList>
    </citation>
    <scope>NUCLEOTIDE SEQUENCE [LARGE SCALE GENOMIC DNA]</scope>
    <source>
        <strain>5AT</strain>
    </source>
</reference>
<proteinExistence type="inferred from homology"/>
<gene>
    <name evidence="1" type="primary">atpG</name>
    <name type="ordered locus">HDEF_2336</name>
</gene>
<sequence>MISAKEIRSKIASVKSTQKITKAMEMVAASKMRKSQESMSATRPYAEMIRKVIGHLALGNLEYKHPYLQERKVKRVGYLVVSTDRGLCGGLNVNLFKKILTDMHDQSEKNVASELSLIGSKGVAFFNSIGAKIVAQVTGISDKPSLPDIIGPVQAMLKAYDEGRLDKLYIANNRFINTMSQQPQITQLLPLLPMDEGQIGVTKKSWDYLYEPEPKVLLDTLLRRYIESQVYQGVVENISSEQAARMVAMKAATDNGGNLIDELQLIYNKARQASITQELTEIVGGASAL</sequence>
<protein>
    <recommendedName>
        <fullName evidence="1">ATP synthase gamma chain</fullName>
    </recommendedName>
    <alternativeName>
        <fullName evidence="1">ATP synthase F1 sector gamma subunit</fullName>
    </alternativeName>
    <alternativeName>
        <fullName evidence="1">F-ATPase gamma subunit</fullName>
    </alternativeName>
</protein>
<feature type="chain" id="PRO_1000213039" description="ATP synthase gamma chain">
    <location>
        <begin position="1"/>
        <end position="289"/>
    </location>
</feature>
<evidence type="ECO:0000255" key="1">
    <source>
        <dbReference type="HAMAP-Rule" id="MF_00815"/>
    </source>
</evidence>
<comment type="function">
    <text evidence="1">Produces ATP from ADP in the presence of a proton gradient across the membrane. The gamma chain is believed to be important in regulating ATPase activity and the flow of protons through the CF(0) complex.</text>
</comment>
<comment type="subunit">
    <text evidence="1">F-type ATPases have 2 components, CF(1) - the catalytic core - and CF(0) - the membrane proton channel. CF(1) has five subunits: alpha(3), beta(3), gamma(1), delta(1), epsilon(1). CF(0) has three main subunits: a, b and c.</text>
</comment>
<comment type="subcellular location">
    <subcellularLocation>
        <location evidence="1">Cell membrane</location>
        <topology evidence="1">Peripheral membrane protein</topology>
    </subcellularLocation>
</comment>
<comment type="similarity">
    <text evidence="1">Belongs to the ATPase gamma chain family.</text>
</comment>
<dbReference type="EMBL" id="CP001277">
    <property type="protein sequence ID" value="ACQ68873.1"/>
    <property type="molecule type" value="Genomic_DNA"/>
</dbReference>
<dbReference type="RefSeq" id="WP_015874592.1">
    <property type="nucleotide sequence ID" value="NC_012751.1"/>
</dbReference>
<dbReference type="SMR" id="C4K904"/>
<dbReference type="STRING" id="572265.HDEF_2336"/>
<dbReference type="GeneID" id="66261825"/>
<dbReference type="KEGG" id="hde:HDEF_2336"/>
<dbReference type="eggNOG" id="COG0224">
    <property type="taxonomic scope" value="Bacteria"/>
</dbReference>
<dbReference type="HOGENOM" id="CLU_050669_0_1_6"/>
<dbReference type="Proteomes" id="UP000002334">
    <property type="component" value="Chromosome"/>
</dbReference>
<dbReference type="GO" id="GO:0005886">
    <property type="term" value="C:plasma membrane"/>
    <property type="evidence" value="ECO:0007669"/>
    <property type="project" value="UniProtKB-SubCell"/>
</dbReference>
<dbReference type="GO" id="GO:0045259">
    <property type="term" value="C:proton-transporting ATP synthase complex"/>
    <property type="evidence" value="ECO:0007669"/>
    <property type="project" value="UniProtKB-KW"/>
</dbReference>
<dbReference type="GO" id="GO:0005524">
    <property type="term" value="F:ATP binding"/>
    <property type="evidence" value="ECO:0007669"/>
    <property type="project" value="UniProtKB-UniRule"/>
</dbReference>
<dbReference type="GO" id="GO:0046933">
    <property type="term" value="F:proton-transporting ATP synthase activity, rotational mechanism"/>
    <property type="evidence" value="ECO:0007669"/>
    <property type="project" value="UniProtKB-UniRule"/>
</dbReference>
<dbReference type="GO" id="GO:0042777">
    <property type="term" value="P:proton motive force-driven plasma membrane ATP synthesis"/>
    <property type="evidence" value="ECO:0007669"/>
    <property type="project" value="UniProtKB-UniRule"/>
</dbReference>
<dbReference type="CDD" id="cd12151">
    <property type="entry name" value="F1-ATPase_gamma"/>
    <property type="match status" value="1"/>
</dbReference>
<dbReference type="FunFam" id="1.10.287.80:FF:000005">
    <property type="entry name" value="ATP synthase gamma chain"/>
    <property type="match status" value="2"/>
</dbReference>
<dbReference type="FunFam" id="3.40.1380.10:FF:000001">
    <property type="entry name" value="ATP synthase gamma chain"/>
    <property type="match status" value="1"/>
</dbReference>
<dbReference type="Gene3D" id="3.40.1380.10">
    <property type="match status" value="1"/>
</dbReference>
<dbReference type="Gene3D" id="1.10.287.80">
    <property type="entry name" value="ATP synthase, gamma subunit, helix hairpin domain"/>
    <property type="match status" value="2"/>
</dbReference>
<dbReference type="HAMAP" id="MF_00815">
    <property type="entry name" value="ATP_synth_gamma_bact"/>
    <property type="match status" value="1"/>
</dbReference>
<dbReference type="InterPro" id="IPR035968">
    <property type="entry name" value="ATP_synth_F1_ATPase_gsu"/>
</dbReference>
<dbReference type="InterPro" id="IPR000131">
    <property type="entry name" value="ATP_synth_F1_gsu"/>
</dbReference>
<dbReference type="InterPro" id="IPR023632">
    <property type="entry name" value="ATP_synth_F1_gsu_CS"/>
</dbReference>
<dbReference type="NCBIfam" id="TIGR01146">
    <property type="entry name" value="ATPsyn_F1gamma"/>
    <property type="match status" value="1"/>
</dbReference>
<dbReference type="NCBIfam" id="NF004144">
    <property type="entry name" value="PRK05621.1-1"/>
    <property type="match status" value="1"/>
</dbReference>
<dbReference type="PANTHER" id="PTHR11693">
    <property type="entry name" value="ATP SYNTHASE GAMMA CHAIN"/>
    <property type="match status" value="1"/>
</dbReference>
<dbReference type="PANTHER" id="PTHR11693:SF22">
    <property type="entry name" value="ATP SYNTHASE SUBUNIT GAMMA, MITOCHONDRIAL"/>
    <property type="match status" value="1"/>
</dbReference>
<dbReference type="Pfam" id="PF00231">
    <property type="entry name" value="ATP-synt"/>
    <property type="match status" value="1"/>
</dbReference>
<dbReference type="PRINTS" id="PR00126">
    <property type="entry name" value="ATPASEGAMMA"/>
</dbReference>
<dbReference type="SUPFAM" id="SSF52943">
    <property type="entry name" value="ATP synthase (F1-ATPase), gamma subunit"/>
    <property type="match status" value="1"/>
</dbReference>
<dbReference type="PROSITE" id="PS00153">
    <property type="entry name" value="ATPASE_GAMMA"/>
    <property type="match status" value="1"/>
</dbReference>
<organism>
    <name type="scientific">Hamiltonella defensa subsp. Acyrthosiphon pisum (strain 5AT)</name>
    <dbReference type="NCBI Taxonomy" id="572265"/>
    <lineage>
        <taxon>Bacteria</taxon>
        <taxon>Pseudomonadati</taxon>
        <taxon>Pseudomonadota</taxon>
        <taxon>Gammaproteobacteria</taxon>
        <taxon>Enterobacterales</taxon>
        <taxon>Enterobacteriaceae</taxon>
        <taxon>aphid secondary symbionts</taxon>
        <taxon>Candidatus Hamiltonella</taxon>
    </lineage>
</organism>
<name>ATPG_HAMD5</name>
<keyword id="KW-0066">ATP synthesis</keyword>
<keyword id="KW-1003">Cell membrane</keyword>
<keyword id="KW-0139">CF(1)</keyword>
<keyword id="KW-0375">Hydrogen ion transport</keyword>
<keyword id="KW-0406">Ion transport</keyword>
<keyword id="KW-0472">Membrane</keyword>
<keyword id="KW-0813">Transport</keyword>